<feature type="chain" id="PRO_0000209061" description="Probable potassium transport system protein Kup">
    <location>
        <begin position="1"/>
        <end position="666"/>
    </location>
</feature>
<feature type="transmembrane region" description="Helical" evidence="1">
    <location>
        <begin position="16"/>
        <end position="36"/>
    </location>
</feature>
<feature type="transmembrane region" description="Helical" evidence="1">
    <location>
        <begin position="58"/>
        <end position="78"/>
    </location>
</feature>
<feature type="transmembrane region" description="Helical" evidence="1">
    <location>
        <begin position="100"/>
        <end position="120"/>
    </location>
</feature>
<feature type="transmembrane region" description="Helical" evidence="1">
    <location>
        <begin position="141"/>
        <end position="161"/>
    </location>
</feature>
<feature type="transmembrane region" description="Helical" evidence="1">
    <location>
        <begin position="165"/>
        <end position="185"/>
    </location>
</feature>
<feature type="transmembrane region" description="Helical" evidence="1">
    <location>
        <begin position="221"/>
        <end position="241"/>
    </location>
</feature>
<feature type="transmembrane region" description="Helical" evidence="1">
    <location>
        <begin position="253"/>
        <end position="273"/>
    </location>
</feature>
<feature type="transmembrane region" description="Helical" evidence="1">
    <location>
        <begin position="294"/>
        <end position="314"/>
    </location>
</feature>
<feature type="transmembrane region" description="Helical" evidence="1">
    <location>
        <begin position="343"/>
        <end position="363"/>
    </location>
</feature>
<feature type="transmembrane region" description="Helical" evidence="1">
    <location>
        <begin position="373"/>
        <end position="393"/>
    </location>
</feature>
<feature type="transmembrane region" description="Helical" evidence="1">
    <location>
        <begin position="399"/>
        <end position="419"/>
    </location>
</feature>
<feature type="transmembrane region" description="Helical" evidence="1">
    <location>
        <begin position="424"/>
        <end position="444"/>
    </location>
</feature>
<name>KUP_STRP1</name>
<gene>
    <name evidence="1" type="primary">kup</name>
    <name type="ordered locus">SPy_1414</name>
    <name type="ordered locus">M5005_Spy1152</name>
    <name type="ORF">M5005_Spy1153</name>
</gene>
<evidence type="ECO:0000255" key="1">
    <source>
        <dbReference type="HAMAP-Rule" id="MF_01522"/>
    </source>
</evidence>
<reference key="1">
    <citation type="journal article" date="2001" name="Proc. Natl. Acad. Sci. U.S.A.">
        <title>Complete genome sequence of an M1 strain of Streptococcus pyogenes.</title>
        <authorList>
            <person name="Ferretti J.J."/>
            <person name="McShan W.M."/>
            <person name="Ajdic D.J."/>
            <person name="Savic D.J."/>
            <person name="Savic G."/>
            <person name="Lyon K."/>
            <person name="Primeaux C."/>
            <person name="Sezate S."/>
            <person name="Suvorov A.N."/>
            <person name="Kenton S."/>
            <person name="Lai H.S."/>
            <person name="Lin S.P."/>
            <person name="Qian Y."/>
            <person name="Jia H.G."/>
            <person name="Najar F.Z."/>
            <person name="Ren Q."/>
            <person name="Zhu H."/>
            <person name="Song L."/>
            <person name="White J."/>
            <person name="Yuan X."/>
            <person name="Clifton S.W."/>
            <person name="Roe B.A."/>
            <person name="McLaughlin R.E."/>
        </authorList>
    </citation>
    <scope>NUCLEOTIDE SEQUENCE [LARGE SCALE GENOMIC DNA]</scope>
    <source>
        <strain>ATCC 700294 / SF370 / Serotype M1</strain>
    </source>
</reference>
<reference key="2">
    <citation type="journal article" date="2005" name="J. Infect. Dis.">
        <title>Evolutionary origin and emergence of a highly successful clone of serotype M1 group A Streptococcus involved multiple horizontal gene transfer events.</title>
        <authorList>
            <person name="Sumby P."/>
            <person name="Porcella S.F."/>
            <person name="Madrigal A.G."/>
            <person name="Barbian K.D."/>
            <person name="Virtaneva K."/>
            <person name="Ricklefs S.M."/>
            <person name="Sturdevant D.E."/>
            <person name="Graham M.R."/>
            <person name="Vuopio-Varkila J."/>
            <person name="Hoe N.P."/>
            <person name="Musser J.M."/>
        </authorList>
    </citation>
    <scope>NUCLEOTIDE SEQUENCE [LARGE SCALE GENOMIC DNA]</scope>
    <source>
        <strain>ATCC BAA-947 / MGAS5005 / Serotype M1</strain>
    </source>
</reference>
<reference key="3">
    <citation type="submission" date="2014-04" db="EMBL/GenBank/DDBJ databases">
        <authorList>
            <person name="Beres S.B."/>
            <person name="Musser J.M."/>
        </authorList>
    </citation>
    <scope>SEQUENCE REVISION</scope>
</reference>
<dbReference type="EMBL" id="AE004092">
    <property type="protein sequence ID" value="AAK34228.1"/>
    <property type="molecule type" value="Genomic_DNA"/>
</dbReference>
<dbReference type="EMBL" id="CP000017">
    <property type="protein sequence ID" value="AAZ51770.2"/>
    <property type="molecule type" value="Genomic_DNA"/>
</dbReference>
<dbReference type="RefSeq" id="NP_269507.1">
    <property type="nucleotide sequence ID" value="NC_002737.2"/>
</dbReference>
<dbReference type="PaxDb" id="1314-HKU360_01188"/>
<dbReference type="KEGG" id="spy:SPy_1414"/>
<dbReference type="KEGG" id="spz:M5005_Spy1152"/>
<dbReference type="PATRIC" id="fig|160490.10.peg.1232"/>
<dbReference type="HOGENOM" id="CLU_008142_4_1_9"/>
<dbReference type="OMA" id="MLLLWKW"/>
<dbReference type="Proteomes" id="UP000000750">
    <property type="component" value="Chromosome"/>
</dbReference>
<dbReference type="GO" id="GO:0005886">
    <property type="term" value="C:plasma membrane"/>
    <property type="evidence" value="ECO:0007669"/>
    <property type="project" value="UniProtKB-SubCell"/>
</dbReference>
<dbReference type="GO" id="GO:0015079">
    <property type="term" value="F:potassium ion transmembrane transporter activity"/>
    <property type="evidence" value="ECO:0007669"/>
    <property type="project" value="UniProtKB-UniRule"/>
</dbReference>
<dbReference type="GO" id="GO:0015293">
    <property type="term" value="F:symporter activity"/>
    <property type="evidence" value="ECO:0007669"/>
    <property type="project" value="UniProtKB-UniRule"/>
</dbReference>
<dbReference type="HAMAP" id="MF_01522">
    <property type="entry name" value="Kup"/>
    <property type="match status" value="1"/>
</dbReference>
<dbReference type="InterPro" id="IPR003855">
    <property type="entry name" value="K+_transporter"/>
</dbReference>
<dbReference type="InterPro" id="IPR053952">
    <property type="entry name" value="K_trans_C"/>
</dbReference>
<dbReference type="InterPro" id="IPR053951">
    <property type="entry name" value="K_trans_N"/>
</dbReference>
<dbReference type="InterPro" id="IPR023051">
    <property type="entry name" value="Kup"/>
</dbReference>
<dbReference type="PANTHER" id="PTHR30540:SF83">
    <property type="entry name" value="K+ POTASSIUM TRANSPORTER"/>
    <property type="match status" value="1"/>
</dbReference>
<dbReference type="PANTHER" id="PTHR30540">
    <property type="entry name" value="OSMOTIC STRESS POTASSIUM TRANSPORTER"/>
    <property type="match status" value="1"/>
</dbReference>
<dbReference type="Pfam" id="PF02705">
    <property type="entry name" value="K_trans"/>
    <property type="match status" value="1"/>
</dbReference>
<dbReference type="Pfam" id="PF22776">
    <property type="entry name" value="K_trans_C"/>
    <property type="match status" value="1"/>
</dbReference>
<comment type="function">
    <text evidence="1">Transport of potassium into the cell. Likely operates as a K(+):H(+) symporter.</text>
</comment>
<comment type="catalytic activity">
    <reaction evidence="1">
        <text>K(+)(in) + H(+)(in) = K(+)(out) + H(+)(out)</text>
        <dbReference type="Rhea" id="RHEA:28490"/>
        <dbReference type="ChEBI" id="CHEBI:15378"/>
        <dbReference type="ChEBI" id="CHEBI:29103"/>
    </reaction>
    <physiologicalReaction direction="right-to-left" evidence="1">
        <dbReference type="Rhea" id="RHEA:28492"/>
    </physiologicalReaction>
</comment>
<comment type="subcellular location">
    <subcellularLocation>
        <location evidence="1">Cell membrane</location>
        <topology evidence="1">Multi-pass membrane protein</topology>
    </subcellularLocation>
</comment>
<comment type="similarity">
    <text evidence="1">Belongs to the HAK/KUP transporter (TC 2.A.72) family.</text>
</comment>
<accession>Q99Z39</accession>
<accession>Q48Y04</accession>
<accession>Q48Y05</accession>
<protein>
    <recommendedName>
        <fullName evidence="1">Probable potassium transport system protein Kup</fullName>
    </recommendedName>
</protein>
<proteinExistence type="inferred from homology"/>
<keyword id="KW-1003">Cell membrane</keyword>
<keyword id="KW-0406">Ion transport</keyword>
<keyword id="KW-0472">Membrane</keyword>
<keyword id="KW-0630">Potassium</keyword>
<keyword id="KW-0633">Potassium transport</keyword>
<keyword id="KW-1185">Reference proteome</keyword>
<keyword id="KW-0769">Symport</keyword>
<keyword id="KW-0812">Transmembrane</keyword>
<keyword id="KW-1133">Transmembrane helix</keyword>
<keyword id="KW-0813">Transport</keyword>
<organism>
    <name type="scientific">Streptococcus pyogenes serotype M1</name>
    <dbReference type="NCBI Taxonomy" id="301447"/>
    <lineage>
        <taxon>Bacteria</taxon>
        <taxon>Bacillati</taxon>
        <taxon>Bacillota</taxon>
        <taxon>Bacilli</taxon>
        <taxon>Lactobacillales</taxon>
        <taxon>Streptococcaceae</taxon>
        <taxon>Streptococcus</taxon>
    </lineage>
</organism>
<sequence length="666" mass="74607">MSDSHLTAFDKASKAGFIIALGIVYGDIGTSPLYTIQSLVENQGGVNQVSESFILGSISLIIWTLTLITTIKYVLIALKADNHHEGGIFSLFTLVRKMSPWLIIPAMIGGATLLSDGALTPAVTVTSAIEGLKAVPGLSHIYQNQTNVIITTLVILIVLFGIQRFGTGFIGKIFGPVMFIWFSFLGVSGFFNTLGHLEIFKAINPYYALHLLFSPENHRGIFILGSIFLATTGAEALYSDLGHVGRGNIYVSWPFVKMCIVLSYCGQAAWILANKHSGIELNPFFASVPSQLRVYLVSLATLAAIIASQALISGSFTLVSEAMRLKIFPLFRVTYPGANLGQLYIPVINWILFAVTSCTVLAFRTSAHMEAAYGLAITITMLMTTILLKYYLIKKGTRPILAHLVMAFFALVEFIFFLASAIKFMHGGYAVVILALAIVFVMFIWHAGTRIVFKYVKSLNLNDYKEQIKQLRDDVCFDLYQTNVVYLSNRMQDHMIDRSILYSILDKRPKRAQVYWFVNVQVTDEPYTAKYKVDMMGTDYMVRVNLYLGFRMPQTVPRYLRTIVQDLMESGRLPKQEQEYTITPGRDVGDFRFVLIEERVSNARQLSNFERFIMQTKASIKHVTASPMRWFGLQYSEVTLEVVPLILSDVLKLPIKELVPVEDSEA</sequence>